<keyword id="KW-0131">Cell cycle</keyword>
<keyword id="KW-0132">Cell division</keyword>
<keyword id="KW-1003">Cell membrane</keyword>
<keyword id="KW-0472">Membrane</keyword>
<keyword id="KW-1185">Reference proteome</keyword>
<keyword id="KW-0812">Transmembrane</keyword>
<keyword id="KW-1133">Transmembrane helix</keyword>
<comment type="function">
    <text evidence="1">Cell division protein that may be involved in stabilizing or promoting the assembly of the division complex.</text>
</comment>
<comment type="subcellular location">
    <subcellularLocation>
        <location evidence="1">Cell membrane</location>
        <topology evidence="1">Single-pass type II membrane protein</topology>
    </subcellularLocation>
    <text evidence="1">Localizes to the division septum.</text>
</comment>
<comment type="similarity">
    <text evidence="1">Belongs to the FtsQ/DivIB family. DivIB subfamily.</text>
</comment>
<name>DIVIB_STAA8</name>
<proteinExistence type="inferred from homology"/>
<protein>
    <recommendedName>
        <fullName evidence="1">Cell division protein DivIB</fullName>
    </recommendedName>
</protein>
<organism>
    <name type="scientific">Staphylococcus aureus (strain NCTC 8325 / PS 47)</name>
    <dbReference type="NCBI Taxonomy" id="93061"/>
    <lineage>
        <taxon>Bacteria</taxon>
        <taxon>Bacillati</taxon>
        <taxon>Bacillota</taxon>
        <taxon>Bacilli</taxon>
        <taxon>Bacillales</taxon>
        <taxon>Staphylococcaceae</taxon>
        <taxon>Staphylococcus</taxon>
    </lineage>
</organism>
<gene>
    <name evidence="1" type="primary">divIB</name>
    <name type="ordered locus">SAOUHSC_01148</name>
</gene>
<feature type="chain" id="PRO_0000414786" description="Cell division protein DivIB">
    <location>
        <begin position="1"/>
        <end position="439"/>
    </location>
</feature>
<feature type="topological domain" description="Cytoplasmic" evidence="1">
    <location>
        <begin position="1"/>
        <end position="173"/>
    </location>
</feature>
<feature type="transmembrane region" description="Helical" evidence="1">
    <location>
        <begin position="174"/>
        <end position="194"/>
    </location>
</feature>
<feature type="topological domain" description="Extracellular" evidence="1">
    <location>
        <begin position="195"/>
        <end position="439"/>
    </location>
</feature>
<feature type="domain" description="POTRA" evidence="2">
    <location>
        <begin position="195"/>
        <end position="263"/>
    </location>
</feature>
<feature type="region of interest" description="Disordered" evidence="3">
    <location>
        <begin position="1"/>
        <end position="96"/>
    </location>
</feature>
<feature type="region of interest" description="Disordered" evidence="3">
    <location>
        <begin position="119"/>
        <end position="149"/>
    </location>
</feature>
<feature type="region of interest" description="Disordered" evidence="3">
    <location>
        <begin position="396"/>
        <end position="439"/>
    </location>
</feature>
<feature type="compositionally biased region" description="Acidic residues" evidence="3">
    <location>
        <begin position="11"/>
        <end position="20"/>
    </location>
</feature>
<feature type="compositionally biased region" description="Basic residues" evidence="3">
    <location>
        <begin position="26"/>
        <end position="38"/>
    </location>
</feature>
<feature type="compositionally biased region" description="Basic and acidic residues" evidence="3">
    <location>
        <begin position="64"/>
        <end position="76"/>
    </location>
</feature>
<feature type="compositionally biased region" description="Low complexity" evidence="3">
    <location>
        <begin position="77"/>
        <end position="86"/>
    </location>
</feature>
<feature type="compositionally biased region" description="Acidic residues" evidence="3">
    <location>
        <begin position="87"/>
        <end position="96"/>
    </location>
</feature>
<feature type="compositionally biased region" description="Polar residues" evidence="3">
    <location>
        <begin position="119"/>
        <end position="133"/>
    </location>
</feature>
<feature type="compositionally biased region" description="Basic and acidic residues" evidence="3">
    <location>
        <begin position="405"/>
        <end position="424"/>
    </location>
</feature>
<feature type="compositionally biased region" description="Polar residues" evidence="3">
    <location>
        <begin position="426"/>
        <end position="439"/>
    </location>
</feature>
<sequence length="439" mass="50212">MDDKTKNDQQESNEDKDELELFTRNTSKKRRQRKRSKATHFSNQNKDDTSQQADFDEEIYLINKDFKKEESNDKNNDSASSHANDNNIDDSTDSNIENEDYRYNQEIDDQNESNVISVDNEQPQSAPKEQNSDSIDEETVTKKERKSKVTQLKPLTLEEKRKLRRKRQKRIQYSVITILVLLIAVILIYMFSPLSKIAHVNINGNNHVSTSKINKVLGVKNDSRMYTFSKKNAINDLEENPLIKSVEIHKQLPNTLNVDITENEIIALVKYKGKYLPLLENGKLLKGSNDVKINDAPVMDGFKGTKEDDMIKALSEMTPEVRRYIAEVTYAPSKNKQSRIELFTTDGLQVIGDISTISKKMKYYPQMSQSLSRDSSGKLKTRGYIDLSVGASFIPYRGNTSSQSESDKNVTKSSQEENQAKEELQSVLNKINKQSSKNN</sequence>
<accession>Q2FZ91</accession>
<reference key="1">
    <citation type="book" date="2006" name="Gram positive pathogens, 2nd edition">
        <title>The Staphylococcus aureus NCTC 8325 genome.</title>
        <editorList>
            <person name="Fischetti V."/>
            <person name="Novick R."/>
            <person name="Ferretti J."/>
            <person name="Portnoy D."/>
            <person name="Rood J."/>
        </editorList>
        <authorList>
            <person name="Gillaspy A.F."/>
            <person name="Worrell V."/>
            <person name="Orvis J."/>
            <person name="Roe B.A."/>
            <person name="Dyer D.W."/>
            <person name="Iandolo J.J."/>
        </authorList>
    </citation>
    <scope>NUCLEOTIDE SEQUENCE [LARGE SCALE GENOMIC DNA]</scope>
    <source>
        <strain>NCTC 8325 / PS 47</strain>
    </source>
</reference>
<dbReference type="EMBL" id="CP000253">
    <property type="protein sequence ID" value="ABD30258.1"/>
    <property type="molecule type" value="Genomic_DNA"/>
</dbReference>
<dbReference type="RefSeq" id="WP_000342185.1">
    <property type="nucleotide sequence ID" value="NZ_LS483365.1"/>
</dbReference>
<dbReference type="RefSeq" id="YP_499690.1">
    <property type="nucleotide sequence ID" value="NC_007795.1"/>
</dbReference>
<dbReference type="STRING" id="93061.SAOUHSC_01148"/>
<dbReference type="PaxDb" id="1280-SAXN108_1182"/>
<dbReference type="GeneID" id="3920708"/>
<dbReference type="KEGG" id="sao:SAOUHSC_01148"/>
<dbReference type="PATRIC" id="fig|93061.5.peg.1053"/>
<dbReference type="eggNOG" id="COG1589">
    <property type="taxonomic scope" value="Bacteria"/>
</dbReference>
<dbReference type="HOGENOM" id="CLU_046278_3_1_9"/>
<dbReference type="OrthoDB" id="1819027at2"/>
<dbReference type="PRO" id="PR:Q2FZ91"/>
<dbReference type="Proteomes" id="UP000008816">
    <property type="component" value="Chromosome"/>
</dbReference>
<dbReference type="GO" id="GO:0032153">
    <property type="term" value="C:cell division site"/>
    <property type="evidence" value="ECO:0007669"/>
    <property type="project" value="UniProtKB-UniRule"/>
</dbReference>
<dbReference type="GO" id="GO:0005886">
    <property type="term" value="C:plasma membrane"/>
    <property type="evidence" value="ECO:0007669"/>
    <property type="project" value="UniProtKB-SubCell"/>
</dbReference>
<dbReference type="GO" id="GO:0043093">
    <property type="term" value="P:FtsZ-dependent cytokinesis"/>
    <property type="evidence" value="ECO:0007669"/>
    <property type="project" value="UniProtKB-UniRule"/>
</dbReference>
<dbReference type="Gene3D" id="3.40.50.10960">
    <property type="match status" value="1"/>
</dbReference>
<dbReference type="Gene3D" id="3.10.20.310">
    <property type="entry name" value="membrane protein fhac"/>
    <property type="match status" value="1"/>
</dbReference>
<dbReference type="HAMAP" id="MF_00912">
    <property type="entry name" value="DivIB"/>
    <property type="match status" value="1"/>
</dbReference>
<dbReference type="InterPro" id="IPR005548">
    <property type="entry name" value="Cell_div_FtsQ/DivIB_C"/>
</dbReference>
<dbReference type="InterPro" id="IPR026580">
    <property type="entry name" value="DivIB"/>
</dbReference>
<dbReference type="InterPro" id="IPR050487">
    <property type="entry name" value="FtsQ_DivIB"/>
</dbReference>
<dbReference type="InterPro" id="IPR034746">
    <property type="entry name" value="POTRA"/>
</dbReference>
<dbReference type="InterPro" id="IPR013685">
    <property type="entry name" value="POTRA_FtsQ_type"/>
</dbReference>
<dbReference type="PANTHER" id="PTHR37820">
    <property type="entry name" value="CELL DIVISION PROTEIN DIVIB"/>
    <property type="match status" value="1"/>
</dbReference>
<dbReference type="PANTHER" id="PTHR37820:SF1">
    <property type="entry name" value="CELL DIVISION PROTEIN FTSQ"/>
    <property type="match status" value="1"/>
</dbReference>
<dbReference type="Pfam" id="PF03799">
    <property type="entry name" value="FtsQ_DivIB_C"/>
    <property type="match status" value="1"/>
</dbReference>
<dbReference type="Pfam" id="PF08478">
    <property type="entry name" value="POTRA_1"/>
    <property type="match status" value="1"/>
</dbReference>
<dbReference type="PROSITE" id="PS51779">
    <property type="entry name" value="POTRA"/>
    <property type="match status" value="1"/>
</dbReference>
<evidence type="ECO:0000255" key="1">
    <source>
        <dbReference type="HAMAP-Rule" id="MF_00912"/>
    </source>
</evidence>
<evidence type="ECO:0000255" key="2">
    <source>
        <dbReference type="PROSITE-ProRule" id="PRU01115"/>
    </source>
</evidence>
<evidence type="ECO:0000256" key="3">
    <source>
        <dbReference type="SAM" id="MobiDB-lite"/>
    </source>
</evidence>